<proteinExistence type="inferred from homology"/>
<comment type="function">
    <text evidence="1">Cleaves peptides in various proteins in a process that requires ATP hydrolysis. Has a chymotrypsin-like activity. Plays a major role in the degradation of misfolded proteins.</text>
</comment>
<comment type="catalytic activity">
    <reaction evidence="1">
        <text>Hydrolysis of proteins to small peptides in the presence of ATP and magnesium. alpha-casein is the usual test substrate. In the absence of ATP, only oligopeptides shorter than five residues are hydrolyzed (such as succinyl-Leu-Tyr-|-NHMec, and Leu-Tyr-Leu-|-Tyr-Trp, in which cleavage of the -Tyr-|-Leu- and -Tyr-|-Trp bonds also occurs).</text>
        <dbReference type="EC" id="3.4.21.92"/>
    </reaction>
</comment>
<comment type="subunit">
    <text evidence="1">Fourteen ClpP subunits assemble into 2 heptameric rings which stack back to back to give a disk-like structure with a central cavity, resembling the structure of eukaryotic proteasomes.</text>
</comment>
<comment type="subcellular location">
    <subcellularLocation>
        <location evidence="1">Cytoplasm</location>
    </subcellularLocation>
</comment>
<comment type="similarity">
    <text evidence="1">Belongs to the peptidase S14 family.</text>
</comment>
<evidence type="ECO:0000255" key="1">
    <source>
        <dbReference type="HAMAP-Rule" id="MF_00444"/>
    </source>
</evidence>
<protein>
    <recommendedName>
        <fullName evidence="1">ATP-dependent Clp protease proteolytic subunit</fullName>
        <ecNumber evidence="1">3.4.21.92</ecNumber>
    </recommendedName>
    <alternativeName>
        <fullName evidence="1">Endopeptidase Clp</fullName>
    </alternativeName>
</protein>
<sequence length="204" mass="23026">MEVMSVIPYVIEQTGRGERSYDIYSRLLKDRIIFVGTPVESQMANSIVAQLLLLDSQNPEQEIQMYINCPGGEVYAGLAIYDTMRYIKAPVSTICVGMAMSMGSVLLMAGDKGKRMALPNSRIMIHQGSAGFRGNTPDLEVQAKEVLKLRDTLVDIYHKHTDLPQEKLLRDMERDYFMSPEEALKYGLIDQVIDQTRENRGGEE</sequence>
<keyword id="KW-0963">Cytoplasm</keyword>
<keyword id="KW-0378">Hydrolase</keyword>
<keyword id="KW-0645">Protease</keyword>
<keyword id="KW-1185">Reference proteome</keyword>
<keyword id="KW-0720">Serine protease</keyword>
<feature type="chain" id="PRO_0000179548" description="ATP-dependent Clp protease proteolytic subunit">
    <location>
        <begin position="1"/>
        <end position="204"/>
    </location>
</feature>
<feature type="active site" description="Nucleophile" evidence="1">
    <location>
        <position position="101"/>
    </location>
</feature>
<feature type="active site" evidence="1">
    <location>
        <position position="126"/>
    </location>
</feature>
<organism>
    <name type="scientific">Deinococcus radiodurans (strain ATCC 13939 / DSM 20539 / JCM 16871 / CCUG 27074 / LMG 4051 / NBRC 15346 / NCIMB 9279 / VKM B-1422 / R1)</name>
    <dbReference type="NCBI Taxonomy" id="243230"/>
    <lineage>
        <taxon>Bacteria</taxon>
        <taxon>Thermotogati</taxon>
        <taxon>Deinococcota</taxon>
        <taxon>Deinococci</taxon>
        <taxon>Deinococcales</taxon>
        <taxon>Deinococcaceae</taxon>
        <taxon>Deinococcus</taxon>
    </lineage>
</organism>
<gene>
    <name evidence="1" type="primary">clpP</name>
    <name type="ordered locus">DR_1972</name>
</gene>
<name>CLPP_DEIRA</name>
<dbReference type="EC" id="3.4.21.92" evidence="1"/>
<dbReference type="EMBL" id="AE000513">
    <property type="protein sequence ID" value="AAF11524.1"/>
    <property type="molecule type" value="Genomic_DNA"/>
</dbReference>
<dbReference type="PIR" id="E75331">
    <property type="entry name" value="E75331"/>
</dbReference>
<dbReference type="RefSeq" id="NP_295695.1">
    <property type="nucleotide sequence ID" value="NC_001263.1"/>
</dbReference>
<dbReference type="RefSeq" id="WP_010888605.1">
    <property type="nucleotide sequence ID" value="NC_001263.1"/>
</dbReference>
<dbReference type="SMR" id="Q9RSZ7"/>
<dbReference type="FunCoup" id="Q9RSZ7">
    <property type="interactions" value="432"/>
</dbReference>
<dbReference type="STRING" id="243230.DR_1972"/>
<dbReference type="MEROPS" id="S14.001"/>
<dbReference type="PaxDb" id="243230-DR_1972"/>
<dbReference type="EnsemblBacteria" id="AAF11524">
    <property type="protein sequence ID" value="AAF11524"/>
    <property type="gene ID" value="DR_1972"/>
</dbReference>
<dbReference type="GeneID" id="69518208"/>
<dbReference type="KEGG" id="dra:DR_1972"/>
<dbReference type="PATRIC" id="fig|243230.17.peg.2193"/>
<dbReference type="eggNOG" id="COG0740">
    <property type="taxonomic scope" value="Bacteria"/>
</dbReference>
<dbReference type="HOGENOM" id="CLU_058707_3_2_0"/>
<dbReference type="InParanoid" id="Q9RSZ7"/>
<dbReference type="OrthoDB" id="9802800at2"/>
<dbReference type="Proteomes" id="UP000002524">
    <property type="component" value="Chromosome 1"/>
</dbReference>
<dbReference type="GO" id="GO:0005737">
    <property type="term" value="C:cytoplasm"/>
    <property type="evidence" value="ECO:0007669"/>
    <property type="project" value="UniProtKB-SubCell"/>
</dbReference>
<dbReference type="GO" id="GO:0009368">
    <property type="term" value="C:endopeptidase Clp complex"/>
    <property type="evidence" value="ECO:0000318"/>
    <property type="project" value="GO_Central"/>
</dbReference>
<dbReference type="GO" id="GO:0004176">
    <property type="term" value="F:ATP-dependent peptidase activity"/>
    <property type="evidence" value="ECO:0000318"/>
    <property type="project" value="GO_Central"/>
</dbReference>
<dbReference type="GO" id="GO:0051117">
    <property type="term" value="F:ATPase binding"/>
    <property type="evidence" value="ECO:0000318"/>
    <property type="project" value="GO_Central"/>
</dbReference>
<dbReference type="GO" id="GO:0004252">
    <property type="term" value="F:serine-type endopeptidase activity"/>
    <property type="evidence" value="ECO:0000318"/>
    <property type="project" value="GO_Central"/>
</dbReference>
<dbReference type="GO" id="GO:0006515">
    <property type="term" value="P:protein quality control for misfolded or incompletely synthesized proteins"/>
    <property type="evidence" value="ECO:0000318"/>
    <property type="project" value="GO_Central"/>
</dbReference>
<dbReference type="CDD" id="cd07017">
    <property type="entry name" value="S14_ClpP_2"/>
    <property type="match status" value="1"/>
</dbReference>
<dbReference type="FunFam" id="3.90.226.10:FF:000001">
    <property type="entry name" value="ATP-dependent Clp protease proteolytic subunit"/>
    <property type="match status" value="1"/>
</dbReference>
<dbReference type="Gene3D" id="3.90.226.10">
    <property type="entry name" value="2-enoyl-CoA Hydratase, Chain A, domain 1"/>
    <property type="match status" value="1"/>
</dbReference>
<dbReference type="HAMAP" id="MF_00444">
    <property type="entry name" value="ClpP"/>
    <property type="match status" value="1"/>
</dbReference>
<dbReference type="InterPro" id="IPR001907">
    <property type="entry name" value="ClpP"/>
</dbReference>
<dbReference type="InterPro" id="IPR029045">
    <property type="entry name" value="ClpP/crotonase-like_dom_sf"/>
</dbReference>
<dbReference type="InterPro" id="IPR023562">
    <property type="entry name" value="ClpP/TepA"/>
</dbReference>
<dbReference type="NCBIfam" id="NF001368">
    <property type="entry name" value="PRK00277.1"/>
    <property type="match status" value="1"/>
</dbReference>
<dbReference type="NCBIfam" id="NF009205">
    <property type="entry name" value="PRK12553.1"/>
    <property type="match status" value="1"/>
</dbReference>
<dbReference type="NCBIfam" id="NF011090">
    <property type="entry name" value="PRK14513.1"/>
    <property type="match status" value="1"/>
</dbReference>
<dbReference type="PANTHER" id="PTHR10381">
    <property type="entry name" value="ATP-DEPENDENT CLP PROTEASE PROTEOLYTIC SUBUNIT"/>
    <property type="match status" value="1"/>
</dbReference>
<dbReference type="PANTHER" id="PTHR10381:SF70">
    <property type="entry name" value="ATP-DEPENDENT CLP PROTEASE PROTEOLYTIC SUBUNIT"/>
    <property type="match status" value="1"/>
</dbReference>
<dbReference type="Pfam" id="PF00574">
    <property type="entry name" value="CLP_protease"/>
    <property type="match status" value="1"/>
</dbReference>
<dbReference type="PRINTS" id="PR00127">
    <property type="entry name" value="CLPPROTEASEP"/>
</dbReference>
<dbReference type="SUPFAM" id="SSF52096">
    <property type="entry name" value="ClpP/crotonase"/>
    <property type="match status" value="1"/>
</dbReference>
<accession>Q9RSZ7</accession>
<reference key="1">
    <citation type="journal article" date="1999" name="Science">
        <title>Genome sequence of the radioresistant bacterium Deinococcus radiodurans R1.</title>
        <authorList>
            <person name="White O."/>
            <person name="Eisen J.A."/>
            <person name="Heidelberg J.F."/>
            <person name="Hickey E.K."/>
            <person name="Peterson J.D."/>
            <person name="Dodson R.J."/>
            <person name="Haft D.H."/>
            <person name="Gwinn M.L."/>
            <person name="Nelson W.C."/>
            <person name="Richardson D.L."/>
            <person name="Moffat K.S."/>
            <person name="Qin H."/>
            <person name="Jiang L."/>
            <person name="Pamphile W."/>
            <person name="Crosby M."/>
            <person name="Shen M."/>
            <person name="Vamathevan J.J."/>
            <person name="Lam P."/>
            <person name="McDonald L.A."/>
            <person name="Utterback T.R."/>
            <person name="Zalewski C."/>
            <person name="Makarova K.S."/>
            <person name="Aravind L."/>
            <person name="Daly M.J."/>
            <person name="Minton K.W."/>
            <person name="Fleischmann R.D."/>
            <person name="Ketchum K.A."/>
            <person name="Nelson K.E."/>
            <person name="Salzberg S.L."/>
            <person name="Smith H.O."/>
            <person name="Venter J.C."/>
            <person name="Fraser C.M."/>
        </authorList>
    </citation>
    <scope>NUCLEOTIDE SEQUENCE [LARGE SCALE GENOMIC DNA]</scope>
    <source>
        <strain>ATCC 13939 / DSM 20539 / JCM 16871 / CCUG 27074 / LMG 4051 / NBRC 15346 / NCIMB 9279 / VKM B-1422 / R1</strain>
    </source>
</reference>